<feature type="chain" id="PRO_1000010222" description="Ribosomal RNA small subunit methyltransferase G">
    <location>
        <begin position="1"/>
        <end position="237"/>
    </location>
</feature>
<feature type="binding site" evidence="1">
    <location>
        <position position="78"/>
    </location>
    <ligand>
        <name>S-adenosyl-L-methionine</name>
        <dbReference type="ChEBI" id="CHEBI:59789"/>
    </ligand>
</feature>
<feature type="binding site" evidence="1">
    <location>
        <position position="83"/>
    </location>
    <ligand>
        <name>S-adenosyl-L-methionine</name>
        <dbReference type="ChEBI" id="CHEBI:59789"/>
    </ligand>
</feature>
<feature type="binding site" evidence="1">
    <location>
        <begin position="129"/>
        <end position="130"/>
    </location>
    <ligand>
        <name>S-adenosyl-L-methionine</name>
        <dbReference type="ChEBI" id="CHEBI:59789"/>
    </ligand>
</feature>
<feature type="binding site" evidence="1">
    <location>
        <position position="148"/>
    </location>
    <ligand>
        <name>S-adenosyl-L-methionine</name>
        <dbReference type="ChEBI" id="CHEBI:59789"/>
    </ligand>
</feature>
<organism>
    <name type="scientific">Streptococcus pyogenes serotype M2 (strain MGAS10270)</name>
    <dbReference type="NCBI Taxonomy" id="370552"/>
    <lineage>
        <taxon>Bacteria</taxon>
        <taxon>Bacillati</taxon>
        <taxon>Bacillota</taxon>
        <taxon>Bacilli</taxon>
        <taxon>Lactobacillales</taxon>
        <taxon>Streptococcaceae</taxon>
        <taxon>Streptococcus</taxon>
    </lineage>
</organism>
<proteinExistence type="inferred from homology"/>
<keyword id="KW-0963">Cytoplasm</keyword>
<keyword id="KW-0489">Methyltransferase</keyword>
<keyword id="KW-0698">rRNA processing</keyword>
<keyword id="KW-0949">S-adenosyl-L-methionine</keyword>
<keyword id="KW-0808">Transferase</keyword>
<comment type="function">
    <text evidence="1">Specifically methylates the N7 position of a guanine in 16S rRNA.</text>
</comment>
<comment type="subcellular location">
    <subcellularLocation>
        <location evidence="1">Cytoplasm</location>
    </subcellularLocation>
</comment>
<comment type="similarity">
    <text evidence="1">Belongs to the methyltransferase superfamily. RNA methyltransferase RsmG family.</text>
</comment>
<protein>
    <recommendedName>
        <fullName evidence="1">Ribosomal RNA small subunit methyltransferase G</fullName>
        <ecNumber evidence="1">2.1.1.-</ecNumber>
    </recommendedName>
    <alternativeName>
        <fullName evidence="1">16S rRNA 7-methylguanosine methyltransferase</fullName>
        <shortName evidence="1">16S rRNA m7G methyltransferase</shortName>
    </alternativeName>
</protein>
<accession>Q1JII3</accession>
<gene>
    <name evidence="1" type="primary">rsmG</name>
    <name type="ordered locus">MGAS10270_Spy0275</name>
</gene>
<sequence length="237" mass="26830">MTPQDFYRTLEKDGFLLSSKQKEQFDTYFKLLVEWNTKINLTAITEKNEVYLKHFYDSIAPILQGFLANEPIKLLDIGAGAGFPSLPMKILFPNLEVTIIDSLNKRISFLTLLAQELGLENVHFFHGRAEDFGQDKAFRGQFDVVTARAVARMQVLSELTIPFLKIGGKLIALKAQAADQELEEAKNALCLLFGKVIKNHSYQLPNGDSRFITIVEKKKETPNKYPRKAGLPNKKPL</sequence>
<name>RSMG_STRPD</name>
<evidence type="ECO:0000255" key="1">
    <source>
        <dbReference type="HAMAP-Rule" id="MF_00074"/>
    </source>
</evidence>
<reference key="1">
    <citation type="journal article" date="2006" name="Proc. Natl. Acad. Sci. U.S.A.">
        <title>Molecular genetic anatomy of inter- and intraserotype variation in the human bacterial pathogen group A Streptococcus.</title>
        <authorList>
            <person name="Beres S.B."/>
            <person name="Richter E.W."/>
            <person name="Nagiec M.J."/>
            <person name="Sumby P."/>
            <person name="Porcella S.F."/>
            <person name="DeLeo F.R."/>
            <person name="Musser J.M."/>
        </authorList>
    </citation>
    <scope>NUCLEOTIDE SEQUENCE [LARGE SCALE GENOMIC DNA]</scope>
    <source>
        <strain>MGAS10270</strain>
    </source>
</reference>
<dbReference type="EC" id="2.1.1.-" evidence="1"/>
<dbReference type="EMBL" id="CP000260">
    <property type="protein sequence ID" value="ABF33340.1"/>
    <property type="molecule type" value="Genomic_DNA"/>
</dbReference>
<dbReference type="SMR" id="Q1JII3"/>
<dbReference type="KEGG" id="sph:MGAS10270_Spy0275"/>
<dbReference type="HOGENOM" id="CLU_065341_0_2_9"/>
<dbReference type="Proteomes" id="UP000002436">
    <property type="component" value="Chromosome"/>
</dbReference>
<dbReference type="GO" id="GO:0005829">
    <property type="term" value="C:cytosol"/>
    <property type="evidence" value="ECO:0007669"/>
    <property type="project" value="TreeGrafter"/>
</dbReference>
<dbReference type="GO" id="GO:0070043">
    <property type="term" value="F:rRNA (guanine-N7-)-methyltransferase activity"/>
    <property type="evidence" value="ECO:0007669"/>
    <property type="project" value="UniProtKB-UniRule"/>
</dbReference>
<dbReference type="CDD" id="cd02440">
    <property type="entry name" value="AdoMet_MTases"/>
    <property type="match status" value="1"/>
</dbReference>
<dbReference type="FunFam" id="3.40.50.150:FF:000041">
    <property type="entry name" value="Ribosomal RNA small subunit methyltransferase G"/>
    <property type="match status" value="1"/>
</dbReference>
<dbReference type="Gene3D" id="3.40.50.150">
    <property type="entry name" value="Vaccinia Virus protein VP39"/>
    <property type="match status" value="1"/>
</dbReference>
<dbReference type="HAMAP" id="MF_00074">
    <property type="entry name" value="16SrRNA_methyltr_G"/>
    <property type="match status" value="1"/>
</dbReference>
<dbReference type="InterPro" id="IPR003682">
    <property type="entry name" value="rRNA_ssu_MeTfrase_G"/>
</dbReference>
<dbReference type="InterPro" id="IPR029063">
    <property type="entry name" value="SAM-dependent_MTases_sf"/>
</dbReference>
<dbReference type="NCBIfam" id="TIGR00138">
    <property type="entry name" value="rsmG_gidB"/>
    <property type="match status" value="1"/>
</dbReference>
<dbReference type="PANTHER" id="PTHR31760">
    <property type="entry name" value="S-ADENOSYL-L-METHIONINE-DEPENDENT METHYLTRANSFERASES SUPERFAMILY PROTEIN"/>
    <property type="match status" value="1"/>
</dbReference>
<dbReference type="PANTHER" id="PTHR31760:SF0">
    <property type="entry name" value="S-ADENOSYL-L-METHIONINE-DEPENDENT METHYLTRANSFERASES SUPERFAMILY PROTEIN"/>
    <property type="match status" value="1"/>
</dbReference>
<dbReference type="Pfam" id="PF02527">
    <property type="entry name" value="GidB"/>
    <property type="match status" value="1"/>
</dbReference>
<dbReference type="PIRSF" id="PIRSF003078">
    <property type="entry name" value="GidB"/>
    <property type="match status" value="1"/>
</dbReference>
<dbReference type="SUPFAM" id="SSF53335">
    <property type="entry name" value="S-adenosyl-L-methionine-dependent methyltransferases"/>
    <property type="match status" value="1"/>
</dbReference>